<sequence length="786" mass="87369">MEISTENWCKKPKNRSIFSKNISFQKQNKSTEEPPSSVQKLLASLQQAQNKSDLSEQPSTSKPKKNEKRKKAVAQAPASAPAPGPEEKKKQPKRASVGARMQQQAENARISQTKRPRQVSTSKGSSRNTTAPEQQNYQQQQQQYKGPRIPTDILDELEFRFISNMVECEINDNIRVCFHLELAHWYYIDHMVEDDKISGCPNVGSRDFNFQMCQHCRVLRKYAHRADEVLAKFREYKSTVPTYGAILVDPEMDHVVLVQSYFAKGKNWGFPKGKINQAEPPRDAAIRETFEETGFDFGIYSEKEKKFQRFINDGMVRLYLVKNVPKDFNFQPQTRKEIRKIEWFKIDDLPTDKTDELPAYLQGNKFYMVMPFVKDIQIYVQKEKEKLRRRKAEAVQSTPSSSIFSQLFPAQPPPPVPEDATPTRPMYKRLTSEELFSAFKNPPAGEVARPTLPDMSPAVNGLDTLAVLGICTPLKPGASLNEFSGAPQNCPMISEEAGSPADPSAEIGFAMPMDLKQPVVTSDHPWQHHKISDSSAPPQTLESHQGWLDTQLVNTIMHSPNHPLPPTSNSPATPTAVLGHLIGKPIQPQAILPQAATPTALGSAEKPKSSRISLSDNSAFKAISSTQKQSIPKATAAPPSTEKTRSASLSGSSQVVGKPARNLFNSVVSPVSSGIQSIQGDGGAWEDVWFREQLAATTTAGTSISSLAASNQELAMINREETPIEDPYFKQQAYQKAQKAQSLIPACSQWTNSIKLDIDYVVGPLSFWMQQFSTKSPVSGTGPQLP</sequence>
<proteinExistence type="evidence at protein level"/>
<gene>
    <name evidence="16" type="primary">dcap-2</name>
    <name evidence="11 16" type="synonym">dcp-2</name>
    <name evidence="16" type="synonym">ndx-5</name>
    <name evidence="16" type="ORF">F52G2.1</name>
</gene>
<organism>
    <name type="scientific">Caenorhabditis elegans</name>
    <dbReference type="NCBI Taxonomy" id="6239"/>
    <lineage>
        <taxon>Eukaryota</taxon>
        <taxon>Metazoa</taxon>
        <taxon>Ecdysozoa</taxon>
        <taxon>Nematoda</taxon>
        <taxon>Chromadorea</taxon>
        <taxon>Rhabditida</taxon>
        <taxon>Rhabditina</taxon>
        <taxon>Rhabditomorpha</taxon>
        <taxon>Rhabditoidea</taxon>
        <taxon>Rhabditidae</taxon>
        <taxon>Peloderinae</taxon>
        <taxon>Caenorhabditis</taxon>
    </lineage>
</organism>
<evidence type="ECO:0000250" key="1"/>
<evidence type="ECO:0000250" key="2">
    <source>
        <dbReference type="UniProtKB" id="P53550"/>
    </source>
</evidence>
<evidence type="ECO:0000250" key="3">
    <source>
        <dbReference type="UniProtKB" id="Q8IU60"/>
    </source>
</evidence>
<evidence type="ECO:0000255" key="4">
    <source>
        <dbReference type="PROSITE-ProRule" id="PRU00794"/>
    </source>
</evidence>
<evidence type="ECO:0000256" key="5">
    <source>
        <dbReference type="SAM" id="MobiDB-lite"/>
    </source>
</evidence>
<evidence type="ECO:0000269" key="6">
    <source>
    </source>
</evidence>
<evidence type="ECO:0000269" key="7">
    <source>
    </source>
</evidence>
<evidence type="ECO:0000269" key="8">
    <source>
    </source>
</evidence>
<evidence type="ECO:0000269" key="9">
    <source>
    </source>
</evidence>
<evidence type="ECO:0000269" key="10">
    <source>
    </source>
</evidence>
<evidence type="ECO:0000303" key="11">
    <source>
    </source>
</evidence>
<evidence type="ECO:0000305" key="12"/>
<evidence type="ECO:0000305" key="13">
    <source>
    </source>
</evidence>
<evidence type="ECO:0000312" key="14">
    <source>
        <dbReference type="EMBL" id="ACE88255.1"/>
    </source>
</evidence>
<evidence type="ECO:0000312" key="15">
    <source>
        <dbReference type="WormBase" id="F52G2.1a"/>
    </source>
</evidence>
<evidence type="ECO:0000312" key="16">
    <source>
        <dbReference type="WormBase" id="F52G2.1b"/>
    </source>
</evidence>
<evidence type="ECO:0000312" key="17">
    <source>
        <dbReference type="WormBase" id="F52G2.1c"/>
    </source>
</evidence>
<evidence type="ECO:0000312" key="18">
    <source>
        <dbReference type="WormBase" id="F52G2.1d"/>
    </source>
</evidence>
<reference key="1">
    <citation type="journal article" date="2005" name="Mol. Cell. Biol.">
        <title>Dcp2 Decaps m2,2,7GpppN-capped RNAs, and its activity is sequence and context dependent.</title>
        <authorList>
            <person name="Cohen L.S."/>
            <person name="Mikhli C."/>
            <person name="Jiao X."/>
            <person name="Kiledjian M."/>
            <person name="Kunkel G."/>
            <person name="Davis R.E."/>
        </authorList>
    </citation>
    <scope>NUCLEOTIDE SEQUENCE [MRNA] (ISOFORM A)</scope>
    <scope>FUNCTION</scope>
    <scope>CATALYTIC ACTIVITY</scope>
    <scope>ACTIVITY REGULATION</scope>
    <scope>MUTAGENESIS OF GLU-291</scope>
</reference>
<reference evidence="14" key="2">
    <citation type="submission" date="2008-05" db="EMBL/GenBank/DDBJ databases">
        <authorList>
            <person name="Boag P.R."/>
            <person name="Robida S."/>
            <person name="Blackwell T.K."/>
        </authorList>
    </citation>
    <scope>NUCLEOTIDE SEQUENCE [MRNA] (ISOFORM B)</scope>
</reference>
<reference key="3">
    <citation type="journal article" date="1998" name="Science">
        <title>Genome sequence of the nematode C. elegans: a platform for investigating biology.</title>
        <authorList>
            <consortium name="The C. elegans sequencing consortium"/>
        </authorList>
    </citation>
    <scope>NUCLEOTIDE SEQUENCE [LARGE SCALE GENOMIC DNA]</scope>
    <source>
        <strain>Bristol N2</strain>
    </source>
</reference>
<reference key="4">
    <citation type="journal article" date="2008" name="Dev. Biol.">
        <title>Large P body-like RNPs form in C. elegans oocytes in response to arrested ovulation, heat shock, osmotic stress, and anoxia and are regulated by the major sperm protein pathway.</title>
        <authorList>
            <person name="Jud M.C."/>
            <person name="Czerwinski M.J."/>
            <person name="Wood M.P."/>
            <person name="Young R.A."/>
            <person name="Gallo C.M."/>
            <person name="Bickel J.S."/>
            <person name="Petty E.L."/>
            <person name="Mason J.M."/>
            <person name="Little B.A."/>
            <person name="Padilla P.A."/>
            <person name="Schisa J.A."/>
        </authorList>
    </citation>
    <scope>FUNCTION</scope>
    <scope>SUBCELLULAR LOCATION</scope>
</reference>
<reference key="5">
    <citation type="journal article" date="2014" name="PLoS ONE">
        <title>Diverse functions of mRNA metabolism factors in stress defense and aging of Caenorhabditis elegans.</title>
        <authorList>
            <person name="Rousakis A."/>
            <person name="Vlanti A."/>
            <person name="Borbolis F."/>
            <person name="Roumelioti F."/>
            <person name="Kapetanou M."/>
            <person name="Syntichaki P."/>
        </authorList>
    </citation>
    <scope>FUNCTION</scope>
    <scope>DISRUPTION PHENOTYPE</scope>
</reference>
<reference key="6">
    <citation type="journal article" date="2017" name="Biochem. Biophys. Res. Commun.">
        <title>The C. elegans mRNA decapping enzyme shapes morphology of cilia.</title>
        <authorList>
            <person name="Adachi T."/>
            <person name="Nagahama K."/>
            <person name="Izumi S."/>
        </authorList>
    </citation>
    <scope>FUNCTION</scope>
    <scope>MUTAGENESIS OF ARG-287</scope>
</reference>
<reference key="7">
    <citation type="journal article" date="2020" name="Curr. Biol.">
        <title>The mRNA Decay Factor CAR-1/LSM14 Regulates Axon Regeneration via Mitochondrial Calcium Dynamics.</title>
        <authorList>
            <person name="Tang N.H."/>
            <person name="Kim K.W."/>
            <person name="Xu S."/>
            <person name="Blazie S.M."/>
            <person name="Yee B.A."/>
            <person name="Yeo G.W."/>
            <person name="Jin Y."/>
            <person name="Chisholm A.D."/>
        </authorList>
    </citation>
    <scope>FUNCTION</scope>
</reference>
<feature type="chain" id="PRO_0000057135" description="m7GpppN-mRNA hydrolase dcap-2">
    <location>
        <begin position="1"/>
        <end position="786"/>
    </location>
</feature>
<feature type="domain" description="Nudix hydrolase" evidence="4">
    <location>
        <begin position="238"/>
        <end position="366"/>
    </location>
</feature>
<feature type="region of interest" description="Disordered" evidence="5">
    <location>
        <begin position="25"/>
        <end position="148"/>
    </location>
</feature>
<feature type="region of interest" description="Disordered" evidence="5">
    <location>
        <begin position="556"/>
        <end position="576"/>
    </location>
</feature>
<feature type="region of interest" description="Disordered" evidence="5">
    <location>
        <begin position="623"/>
        <end position="655"/>
    </location>
</feature>
<feature type="short sequence motif" description="Nudix box">
    <location>
        <begin position="273"/>
        <end position="294"/>
    </location>
</feature>
<feature type="compositionally biased region" description="Polar residues" evidence="5">
    <location>
        <begin position="25"/>
        <end position="61"/>
    </location>
</feature>
<feature type="compositionally biased region" description="Basic residues" evidence="5">
    <location>
        <begin position="62"/>
        <end position="72"/>
    </location>
</feature>
<feature type="compositionally biased region" description="Polar residues" evidence="5">
    <location>
        <begin position="101"/>
        <end position="111"/>
    </location>
</feature>
<feature type="compositionally biased region" description="Polar residues" evidence="5">
    <location>
        <begin position="118"/>
        <end position="133"/>
    </location>
</feature>
<feature type="compositionally biased region" description="Low complexity" evidence="5">
    <location>
        <begin position="134"/>
        <end position="144"/>
    </location>
</feature>
<feature type="compositionally biased region" description="Polar residues" evidence="5">
    <location>
        <begin position="623"/>
        <end position="632"/>
    </location>
</feature>
<feature type="compositionally biased region" description="Polar residues" evidence="5">
    <location>
        <begin position="646"/>
        <end position="655"/>
    </location>
</feature>
<feature type="binding site" evidence="1">
    <location>
        <position position="288"/>
    </location>
    <ligand>
        <name>Mg(2+)</name>
        <dbReference type="ChEBI" id="CHEBI:18420"/>
    </ligand>
</feature>
<feature type="binding site" evidence="1">
    <location>
        <position position="292"/>
    </location>
    <ligand>
        <name>Mg(2+)</name>
        <dbReference type="ChEBI" id="CHEBI:18420"/>
    </ligand>
</feature>
<feature type="splice variant" id="VSP_060858" description="In isoform d." evidence="12">
    <location>
        <begin position="1"/>
        <end position="190"/>
    </location>
</feature>
<feature type="splice variant" id="VSP_060859" description="In isoform c." evidence="12">
    <location>
        <begin position="1"/>
        <end position="100"/>
    </location>
</feature>
<feature type="splice variant" id="VSP_014286" description="In isoform a." evidence="11">
    <original>EISTENWCKKPKNRSIFSKNISFQ</original>
    <variation>ASNSTNSK</variation>
    <location>
        <begin position="2"/>
        <end position="25"/>
    </location>
</feature>
<feature type="mutagenesis site" description="In var1; defective ADL, ADF, AWB and AWC sensory neuron cilia." evidence="9">
    <original>R</original>
    <variation>E</variation>
    <location>
        <position position="287"/>
    </location>
</feature>
<feature type="mutagenesis site" description="Abolishes mRNA decapping activity." evidence="6">
    <original>E</original>
    <variation>Q</variation>
    <location>
        <position position="291"/>
    </location>
</feature>
<feature type="sequence conflict" description="In Ref. 2; ACE88255." evidence="12" ref="2">
    <original>MEISTENWCKKPKNRSIFSKNISFQ</original>
    <variation>MASNSTNSK</variation>
    <location>
        <begin position="1"/>
        <end position="25"/>
    </location>
</feature>
<feature type="sequence conflict" description="In Ref. 2; ACE88255." evidence="12" ref="2">
    <location>
        <begin position="214"/>
        <end position="786"/>
    </location>
</feature>
<protein>
    <recommendedName>
        <fullName evidence="12">m7GpppN-mRNA hydrolase dcap-2</fullName>
        <ecNumber evidence="6">3.6.1.62</ecNumber>
    </recommendedName>
    <alternativeName>
        <fullName evidence="12">Nudix hydrolase 5</fullName>
    </alternativeName>
    <alternativeName>
        <fullName evidence="16">mRNA-decapping enzyme 2</fullName>
    </alternativeName>
</protein>
<keyword id="KW-0025">Alternative splicing</keyword>
<keyword id="KW-0963">Cytoplasm</keyword>
<keyword id="KW-0378">Hydrolase</keyword>
<keyword id="KW-0460">Magnesium</keyword>
<keyword id="KW-0464">Manganese</keyword>
<keyword id="KW-0479">Metal-binding</keyword>
<keyword id="KW-0507">mRNA processing</keyword>
<keyword id="KW-0866">Nonsense-mediated mRNA decay</keyword>
<keyword id="KW-1185">Reference proteome</keyword>
<keyword id="KW-0694">RNA-binding</keyword>
<comment type="function">
    <text evidence="6 7 8 9 10">Decapping metalloenzyme that catalyzes the cleavage of the cap structure on mRNAs (PubMed:16199859). Removes the 7-methyl guanine cap structure from mRNA molecules, yielding a 5'-phosphorylated mRNA fragment and 7m-GDP (PubMed:16199859). RNA-decapping enzyme although it does not bind the RNA cap (PubMed:16199859). May contribute to gene regulation in multiple RNA pathways including monomethylguanosine- and trimethylguanosine-capped RNAs (PubMed:16199859). In oocytes, may play a role in the response to stress induced by heat shock, osmotic stress and anoxia (PubMed:18439994). Required for the developmental axon guidance and regrowth of PLM touch receptor neurons (PubMed:31983639). Early in embryogenesis, plays a role in ciliary shape formation in sensory neurons (PubMed:28887031). Promotes survival at high temperatures (PubMed:25061667).</text>
</comment>
<comment type="catalytic activity">
    <reaction evidence="6">
        <text>a 5'-end (N(7)-methyl 5'-triphosphoguanosine)-ribonucleoside in mRNA + H2O = N(7)-methyl-GDP + a 5'-end phospho-ribonucleoside in mRNA + 2 H(+)</text>
        <dbReference type="Rhea" id="RHEA:67484"/>
        <dbReference type="Rhea" id="RHEA-COMP:15692"/>
        <dbReference type="Rhea" id="RHEA-COMP:17167"/>
        <dbReference type="ChEBI" id="CHEBI:15377"/>
        <dbReference type="ChEBI" id="CHEBI:15378"/>
        <dbReference type="ChEBI" id="CHEBI:63714"/>
        <dbReference type="ChEBI" id="CHEBI:138282"/>
        <dbReference type="ChEBI" id="CHEBI:156461"/>
        <dbReference type="EC" id="3.6.1.62"/>
    </reaction>
    <physiologicalReaction direction="left-to-right" evidence="6">
        <dbReference type="Rhea" id="RHEA:67485"/>
    </physiologicalReaction>
</comment>
<comment type="catalytic activity">
    <reaction evidence="6">
        <text>a 5'-end (N(2),N(2),N(7)-trimethyl 5'-triphosphoguanosine)-ribonucleoside in mRNA + H2O = N(2),N(2),N(7)-trimethyl-GDP + a 5'-end phospho-ribonucleoside in mRNA + 2 H(+)</text>
        <dbReference type="Rhea" id="RHEA:67612"/>
        <dbReference type="Rhea" id="RHEA-COMP:15692"/>
        <dbReference type="Rhea" id="RHEA-COMP:17171"/>
        <dbReference type="ChEBI" id="CHEBI:15377"/>
        <dbReference type="ChEBI" id="CHEBI:15378"/>
        <dbReference type="ChEBI" id="CHEBI:138282"/>
        <dbReference type="ChEBI" id="CHEBI:156463"/>
        <dbReference type="ChEBI" id="CHEBI:167623"/>
    </reaction>
    <physiologicalReaction direction="left-to-right" evidence="6">
        <dbReference type="Rhea" id="RHEA:67613"/>
    </physiologicalReaction>
</comment>
<comment type="cofactor">
    <cofactor evidence="3">
        <name>Mg(2+)</name>
        <dbReference type="ChEBI" id="CHEBI:18420"/>
    </cofactor>
    <cofactor evidence="3">
        <name>Mn(2+)</name>
        <dbReference type="ChEBI" id="CHEBI:29035"/>
    </cofactor>
</comment>
<comment type="activity regulation">
    <text evidence="6">Inhibited by capped and uncapped RNA (PubMed:16199859). Not inhibited by dinucleotide cap or methylated nucleotide analogs (PubMed:16199859).</text>
</comment>
<comment type="subunit">
    <text evidence="2">May be a component of the decapping complex composed of dcap-1 and dcap-2.</text>
</comment>
<comment type="subcellular location">
    <subcellularLocation>
        <location evidence="7">Cytoplasmic granule</location>
    </subcellularLocation>
    <subcellularLocation>
        <location evidence="7">Cytoplasm</location>
        <location evidence="7">Perinuclear region</location>
    </subcellularLocation>
    <text evidence="7">Localizes to perinuclear puncta in pachytene-stage germ cells (PubMed:18439994). Diffusely localized to cytoplasmic puncta in maturing oocytes (PubMed:18439994).</text>
</comment>
<comment type="alternative products">
    <event type="alternative splicing"/>
    <isoform>
        <id>O62255-2</id>
        <name evidence="16">b</name>
        <sequence type="displayed"/>
    </isoform>
    <isoform>
        <id>O62255-1</id>
        <name evidence="15">a</name>
        <sequence type="described" ref="VSP_014286"/>
    </isoform>
    <isoform>
        <id>O62255-3</id>
        <name evidence="17">c</name>
        <sequence type="described" ref="VSP_060859"/>
    </isoform>
    <isoform>
        <id>O62255-4</id>
        <name evidence="18">d</name>
        <sequence type="described" ref="VSP_060858"/>
    </isoform>
</comment>
<comment type="tissue specificity">
    <text evidence="13">Expressed in sensory neurons.</text>
</comment>
<comment type="disruption phenotype">
    <text evidence="8">Double RNAi-mediated knockdown with dcap-1 reduces survival at 20 degrees Celsius.</text>
</comment>
<comment type="similarity">
    <text evidence="12">Belongs to the Nudix hydrolase family. DCP2 subfamily.</text>
</comment>
<comment type="sequence caution" evidence="12">
    <conflict type="erroneous initiation">
        <sequence resource="EMBL-CDS" id="ACE88255"/>
    </conflict>
    <text>Truncated N-terminus.</text>
</comment>
<dbReference type="EC" id="3.6.1.62" evidence="6"/>
<dbReference type="EMBL" id="DQ143943">
    <property type="protein sequence ID" value="AAZ73241.1"/>
    <property type="molecule type" value="mRNA"/>
</dbReference>
<dbReference type="EMBL" id="EU760346">
    <property type="protein sequence ID" value="ACE88255.1"/>
    <property type="status" value="ALT_INIT"/>
    <property type="molecule type" value="mRNA"/>
</dbReference>
<dbReference type="EMBL" id="BX284604">
    <property type="protein sequence ID" value="CAB05204.2"/>
    <property type="molecule type" value="Genomic_DNA"/>
</dbReference>
<dbReference type="EMBL" id="AL021488">
    <property type="protein sequence ID" value="CAB05204.2"/>
    <property type="status" value="JOINED"/>
    <property type="molecule type" value="Genomic_DNA"/>
</dbReference>
<dbReference type="EMBL" id="BX284604">
    <property type="protein sequence ID" value="CAB05206.4"/>
    <property type="molecule type" value="Genomic_DNA"/>
</dbReference>
<dbReference type="EMBL" id="AL021488">
    <property type="protein sequence ID" value="CAB05206.4"/>
    <property type="status" value="JOINED"/>
    <property type="molecule type" value="Genomic_DNA"/>
</dbReference>
<dbReference type="EMBL" id="BX284604">
    <property type="protein sequence ID" value="CDR32703.1"/>
    <property type="molecule type" value="Genomic_DNA"/>
</dbReference>
<dbReference type="EMBL" id="BX284604">
    <property type="protein sequence ID" value="CDR32704.1"/>
    <property type="molecule type" value="Genomic_DNA"/>
</dbReference>
<dbReference type="PIR" id="E88886">
    <property type="entry name" value="E88886"/>
</dbReference>
<dbReference type="PIR" id="T22515">
    <property type="entry name" value="T22515"/>
</dbReference>
<dbReference type="RefSeq" id="NP_001293937.1">
    <molecule id="O62255-3"/>
    <property type="nucleotide sequence ID" value="NM_001307008.3"/>
</dbReference>
<dbReference type="RefSeq" id="NP_001293938.1">
    <molecule id="O62255-4"/>
    <property type="nucleotide sequence ID" value="NM_001307009.3"/>
</dbReference>
<dbReference type="RefSeq" id="NP_502608.3">
    <molecule id="O62255-1"/>
    <property type="nucleotide sequence ID" value="NM_070207.7"/>
</dbReference>
<dbReference type="RefSeq" id="NP_502609.2">
    <molecule id="O62255-2"/>
    <property type="nucleotide sequence ID" value="NM_070208.6"/>
</dbReference>
<dbReference type="SMR" id="O62255"/>
<dbReference type="BioGRID" id="43406">
    <property type="interactions" value="2"/>
</dbReference>
<dbReference type="FunCoup" id="O62255">
    <property type="interactions" value="78"/>
</dbReference>
<dbReference type="STRING" id="6239.F52G2.1b.1"/>
<dbReference type="iPTMnet" id="O62255"/>
<dbReference type="PaxDb" id="6239-F52G2.1b"/>
<dbReference type="PeptideAtlas" id="O62255"/>
<dbReference type="EnsemblMetazoa" id="F52G2.1a.1">
    <molecule id="O62255-1"/>
    <property type="protein sequence ID" value="F52G2.1a.1"/>
    <property type="gene ID" value="WBGene00003582"/>
</dbReference>
<dbReference type="EnsemblMetazoa" id="F52G2.1b.1">
    <molecule id="O62255-2"/>
    <property type="protein sequence ID" value="F52G2.1b.1"/>
    <property type="gene ID" value="WBGene00003582"/>
</dbReference>
<dbReference type="EnsemblMetazoa" id="F52G2.1c.1">
    <molecule id="O62255-3"/>
    <property type="protein sequence ID" value="F52G2.1c.1"/>
    <property type="gene ID" value="WBGene00003582"/>
</dbReference>
<dbReference type="EnsemblMetazoa" id="F52G2.1d.1">
    <molecule id="O62255-4"/>
    <property type="protein sequence ID" value="F52G2.1d.1"/>
    <property type="gene ID" value="WBGene00003582"/>
</dbReference>
<dbReference type="GeneID" id="178321"/>
<dbReference type="KEGG" id="cel:CELE_F52G2.1"/>
<dbReference type="UCSC" id="F52G2.1b">
    <molecule id="O62255-2"/>
    <property type="organism name" value="c. elegans"/>
</dbReference>
<dbReference type="AGR" id="WB:WBGene00003582"/>
<dbReference type="CTD" id="178321"/>
<dbReference type="WormBase" id="F52G2.1a">
    <molecule id="O62255-1"/>
    <property type="protein sequence ID" value="CE42539"/>
    <property type="gene ID" value="WBGene00003582"/>
    <property type="gene designation" value="dcap-2"/>
</dbReference>
<dbReference type="WormBase" id="F52G2.1b">
    <molecule id="O62255-2"/>
    <property type="protein sequence ID" value="CE39374"/>
    <property type="gene ID" value="WBGene00003582"/>
    <property type="gene designation" value="dcap-2"/>
</dbReference>
<dbReference type="WormBase" id="F52G2.1c">
    <molecule id="O62255-3"/>
    <property type="protein sequence ID" value="CE49837"/>
    <property type="gene ID" value="WBGene00003582"/>
    <property type="gene designation" value="dcap-2"/>
</dbReference>
<dbReference type="WormBase" id="F52G2.1d">
    <molecule id="O62255-4"/>
    <property type="protein sequence ID" value="CE49931"/>
    <property type="gene ID" value="WBGene00003582"/>
    <property type="gene designation" value="dcap-2"/>
</dbReference>
<dbReference type="eggNOG" id="KOG2937">
    <property type="taxonomic scope" value="Eukaryota"/>
</dbReference>
<dbReference type="GeneTree" id="ENSGT00390000018878"/>
<dbReference type="HOGENOM" id="CLU_401282_0_0_1"/>
<dbReference type="InParanoid" id="O62255"/>
<dbReference type="OMA" id="NDNIRVC"/>
<dbReference type="OrthoDB" id="18996at2759"/>
<dbReference type="Reactome" id="R-CEL-430039">
    <property type="pathway name" value="mRNA decay by 5' to 3' exoribonuclease"/>
</dbReference>
<dbReference type="Reactome" id="R-CEL-450385">
    <property type="pathway name" value="Butyrate Response Factor 1 (BRF1) binds and destabilizes mRNA"/>
</dbReference>
<dbReference type="Reactome" id="R-CEL-450513">
    <property type="pathway name" value="Tristetraprolin (TTP, ZFP36) binds and destabilizes mRNA"/>
</dbReference>
<dbReference type="CD-CODE" id="73A75392">
    <property type="entry name" value="P-granule"/>
</dbReference>
<dbReference type="CD-CODE" id="EE0382A7">
    <property type="entry name" value="P-body"/>
</dbReference>
<dbReference type="PRO" id="PR:O62255"/>
<dbReference type="Proteomes" id="UP000001940">
    <property type="component" value="Chromosome IV"/>
</dbReference>
<dbReference type="Bgee" id="WBGene00003582">
    <property type="expression patterns" value="Expressed in embryo and 4 other cell types or tissues"/>
</dbReference>
<dbReference type="ExpressionAtlas" id="O62255">
    <property type="expression patterns" value="baseline and differential"/>
</dbReference>
<dbReference type="GO" id="GO:0005737">
    <property type="term" value="C:cytoplasm"/>
    <property type="evidence" value="ECO:0000318"/>
    <property type="project" value="GO_Central"/>
</dbReference>
<dbReference type="GO" id="GO:0043186">
    <property type="term" value="C:P granule"/>
    <property type="evidence" value="ECO:0000314"/>
    <property type="project" value="WormBase"/>
</dbReference>
<dbReference type="GO" id="GO:0000932">
    <property type="term" value="C:P-body"/>
    <property type="evidence" value="ECO:0000314"/>
    <property type="project" value="WormBase"/>
</dbReference>
<dbReference type="GO" id="GO:0048471">
    <property type="term" value="C:perinuclear region of cytoplasm"/>
    <property type="evidence" value="ECO:0007669"/>
    <property type="project" value="UniProtKB-SubCell"/>
</dbReference>
<dbReference type="GO" id="GO:0140932">
    <property type="term" value="F:5'-(N(7)-methyl 5'-triphosphoguanosine)-[mRNA] diphosphatase activity"/>
    <property type="evidence" value="ECO:0000314"/>
    <property type="project" value="WormBase"/>
</dbReference>
<dbReference type="GO" id="GO:0140933">
    <property type="term" value="F:5'-(N(7)-methylguanosine 5'-triphospho)-[mRNA] hydrolase activity"/>
    <property type="evidence" value="ECO:0007669"/>
    <property type="project" value="UniProtKB-EC"/>
</dbReference>
<dbReference type="GO" id="GO:0030145">
    <property type="term" value="F:manganese ion binding"/>
    <property type="evidence" value="ECO:0007669"/>
    <property type="project" value="InterPro"/>
</dbReference>
<dbReference type="GO" id="GO:0003723">
    <property type="term" value="F:RNA binding"/>
    <property type="evidence" value="ECO:0007669"/>
    <property type="project" value="UniProtKB-KW"/>
</dbReference>
<dbReference type="GO" id="GO:0000290">
    <property type="term" value="P:deadenylation-dependent decapping of nuclear-transcribed mRNA"/>
    <property type="evidence" value="ECO:0000314"/>
    <property type="project" value="WormBase"/>
</dbReference>
<dbReference type="GO" id="GO:0008340">
    <property type="term" value="P:determination of adult lifespan"/>
    <property type="evidence" value="ECO:0000315"/>
    <property type="project" value="WormBase"/>
</dbReference>
<dbReference type="GO" id="GO:0006397">
    <property type="term" value="P:mRNA processing"/>
    <property type="evidence" value="ECO:0007669"/>
    <property type="project" value="UniProtKB-KW"/>
</dbReference>
<dbReference type="GO" id="GO:0002119">
    <property type="term" value="P:nematode larval development"/>
    <property type="evidence" value="ECO:0000315"/>
    <property type="project" value="WormBase"/>
</dbReference>
<dbReference type="GO" id="GO:0000184">
    <property type="term" value="P:nuclear-transcribed mRNA catabolic process, nonsense-mediated decay"/>
    <property type="evidence" value="ECO:0007669"/>
    <property type="project" value="UniProtKB-KW"/>
</dbReference>
<dbReference type="GO" id="GO:0040012">
    <property type="term" value="P:regulation of locomotion"/>
    <property type="evidence" value="ECO:0000315"/>
    <property type="project" value="WormBase"/>
</dbReference>
<dbReference type="GO" id="GO:0022414">
    <property type="term" value="P:reproductive process"/>
    <property type="evidence" value="ECO:0000315"/>
    <property type="project" value="WormBase"/>
</dbReference>
<dbReference type="GO" id="GO:0009408">
    <property type="term" value="P:response to heat"/>
    <property type="evidence" value="ECO:0000315"/>
    <property type="project" value="WormBase"/>
</dbReference>
<dbReference type="GO" id="GO:0006979">
    <property type="term" value="P:response to oxidative stress"/>
    <property type="evidence" value="ECO:0000315"/>
    <property type="project" value="WormBase"/>
</dbReference>
<dbReference type="GO" id="GO:0009411">
    <property type="term" value="P:response to UV"/>
    <property type="evidence" value="ECO:0000315"/>
    <property type="project" value="WormBase"/>
</dbReference>
<dbReference type="CDD" id="cd03672">
    <property type="entry name" value="NUDIX_Dcp2p_Nudt20"/>
    <property type="match status" value="1"/>
</dbReference>
<dbReference type="FunFam" id="3.90.79.10:FF:000003">
    <property type="entry name" value="M7GpppN-mRNA hydrolase isoform 2"/>
    <property type="match status" value="1"/>
</dbReference>
<dbReference type="FunFam" id="1.10.10.1050:FF:000011">
    <property type="entry name" value="mRNA-decapping enzyme 2"/>
    <property type="match status" value="1"/>
</dbReference>
<dbReference type="Gene3D" id="1.10.10.1050">
    <property type="entry name" value="Dcp2, box A domain"/>
    <property type="match status" value="1"/>
</dbReference>
<dbReference type="Gene3D" id="3.90.79.10">
    <property type="entry name" value="Nucleoside Triphosphate Pyrophosphohydrolase"/>
    <property type="match status" value="1"/>
</dbReference>
<dbReference type="InterPro" id="IPR007722">
    <property type="entry name" value="DCP2_BoxA"/>
</dbReference>
<dbReference type="InterPro" id="IPR036189">
    <property type="entry name" value="DCP2_BoxA_sf"/>
</dbReference>
<dbReference type="InterPro" id="IPR044099">
    <property type="entry name" value="Dcp2_NUDIX"/>
</dbReference>
<dbReference type="InterPro" id="IPR015797">
    <property type="entry name" value="NUDIX_hydrolase-like_dom_sf"/>
</dbReference>
<dbReference type="InterPro" id="IPR020084">
    <property type="entry name" value="NUDIX_hydrolase_CS"/>
</dbReference>
<dbReference type="InterPro" id="IPR000086">
    <property type="entry name" value="NUDIX_hydrolase_dom"/>
</dbReference>
<dbReference type="PANTHER" id="PTHR23114">
    <property type="entry name" value="M7GPPPN-MRNA HYDROLASE"/>
    <property type="match status" value="1"/>
</dbReference>
<dbReference type="PANTHER" id="PTHR23114:SF17">
    <property type="entry name" value="M7GPPPN-MRNA HYDROLASE"/>
    <property type="match status" value="1"/>
</dbReference>
<dbReference type="Pfam" id="PF05026">
    <property type="entry name" value="DCP2"/>
    <property type="match status" value="1"/>
</dbReference>
<dbReference type="Pfam" id="PF00293">
    <property type="entry name" value="NUDIX"/>
    <property type="match status" value="1"/>
</dbReference>
<dbReference type="SMART" id="SM01125">
    <property type="entry name" value="DCP2"/>
    <property type="match status" value="1"/>
</dbReference>
<dbReference type="SUPFAM" id="SSF140586">
    <property type="entry name" value="Dcp2 domain-like"/>
    <property type="match status" value="1"/>
</dbReference>
<dbReference type="SUPFAM" id="SSF55811">
    <property type="entry name" value="Nudix"/>
    <property type="match status" value="1"/>
</dbReference>
<dbReference type="PROSITE" id="PS51462">
    <property type="entry name" value="NUDIX"/>
    <property type="match status" value="1"/>
</dbReference>
<dbReference type="PROSITE" id="PS00893">
    <property type="entry name" value="NUDIX_BOX"/>
    <property type="match status" value="1"/>
</dbReference>
<name>DCP2_CAEEL</name>
<accession>O62255</accession>
<accession>A0A061ACN4</accession>
<accession>A0A061ADX7</accession>
<accession>B3VKU3</accession>
<accession>O62257</accession>
<accession>Q2YS49</accession>
<accession>Q2YS50</accession>
<accession>Q45F95</accession>